<feature type="chain" id="PRO_0000249347" description="Protein Rev">
    <location>
        <begin position="1"/>
        <end position="105"/>
    </location>
</feature>
<feature type="region of interest" description="Homomultimerization" evidence="1">
    <location>
        <begin position="16"/>
        <end position="24"/>
    </location>
</feature>
<feature type="region of interest" description="Disordered" evidence="2">
    <location>
        <begin position="23"/>
        <end position="48"/>
    </location>
</feature>
<feature type="region of interest" description="Disordered" evidence="2">
    <location>
        <begin position="62"/>
        <end position="105"/>
    </location>
</feature>
<feature type="short sequence motif" description="Nuclear localization signal and RNA-binding (RRE)" evidence="1">
    <location>
        <begin position="32"/>
        <end position="48"/>
    </location>
</feature>
<feature type="short sequence motif" description="Nuclear export signal" evidence="1">
    <location>
        <begin position="79"/>
        <end position="92"/>
    </location>
</feature>
<feature type="compositionally biased region" description="Basic residues" evidence="2">
    <location>
        <begin position="34"/>
        <end position="47"/>
    </location>
</feature>
<feature type="compositionally biased region" description="Basic and acidic residues" evidence="2">
    <location>
        <begin position="69"/>
        <end position="83"/>
    </location>
</feature>
<feature type="compositionally biased region" description="Polar residues" evidence="2">
    <location>
        <begin position="87"/>
        <end position="105"/>
    </location>
</feature>
<evidence type="ECO:0000250" key="1"/>
<evidence type="ECO:0000256" key="2">
    <source>
        <dbReference type="SAM" id="MobiDB-lite"/>
    </source>
</evidence>
<accession>Q8AIH7</accession>
<reference key="1">
    <citation type="journal article" date="2003" name="J. Virol.">
        <title>Amplification of a complete simian immunodeficiency virus genome from fecal RNA of a wild chimpanzee.</title>
        <authorList>
            <person name="Santiago M.L."/>
            <person name="Bibollet-Ruche F."/>
            <person name="Bailes E."/>
            <person name="Kamenya S."/>
            <person name="Muller M.N."/>
            <person name="Lukasik M."/>
            <person name="Pusey A.E."/>
            <person name="Collins D.A."/>
            <person name="Wrangham R.W."/>
            <person name="Goodall J."/>
            <person name="Shaw G.M."/>
            <person name="Sharp P.M."/>
            <person name="Hahn B.H."/>
        </authorList>
    </citation>
    <scope>NUCLEOTIDE SEQUENCE [GENOMIC RNA]</scope>
</reference>
<gene>
    <name type="primary">rev</name>
</gene>
<keyword id="KW-1035">Host cytoplasm</keyword>
<keyword id="KW-1048">Host nucleus</keyword>
<keyword id="KW-0509">mRNA transport</keyword>
<keyword id="KW-1185">Reference proteome</keyword>
<keyword id="KW-0694">RNA-binding</keyword>
<keyword id="KW-0813">Transport</keyword>
<sequence>MAGREEDANLLYTVRIIKILYDSNPYPSGAGSRTARRNRRRRWRQRQHQVDALASRILQYRLGGPQEPPHLDIPDLSKLHLDPLDQPASTETGDNQLGTQPSNSA</sequence>
<proteinExistence type="inferred from homology"/>
<dbReference type="EMBL" id="AF447763">
    <property type="protein sequence ID" value="AAO13964.1"/>
    <property type="molecule type" value="Genomic_RNA"/>
</dbReference>
<dbReference type="SMR" id="Q8AIH7"/>
<dbReference type="Proteomes" id="UP000007222">
    <property type="component" value="Segment"/>
</dbReference>
<dbReference type="GO" id="GO:0030430">
    <property type="term" value="C:host cell cytoplasm"/>
    <property type="evidence" value="ECO:0007669"/>
    <property type="project" value="UniProtKB-SubCell"/>
</dbReference>
<dbReference type="GO" id="GO:0044196">
    <property type="term" value="C:host cell nucleolus"/>
    <property type="evidence" value="ECO:0007669"/>
    <property type="project" value="UniProtKB-SubCell"/>
</dbReference>
<dbReference type="GO" id="GO:0003700">
    <property type="term" value="F:DNA-binding transcription factor activity"/>
    <property type="evidence" value="ECO:0007669"/>
    <property type="project" value="InterPro"/>
</dbReference>
<dbReference type="GO" id="GO:0003723">
    <property type="term" value="F:RNA binding"/>
    <property type="evidence" value="ECO:0007669"/>
    <property type="project" value="UniProtKB-KW"/>
</dbReference>
<dbReference type="GO" id="GO:0051028">
    <property type="term" value="P:mRNA transport"/>
    <property type="evidence" value="ECO:0007669"/>
    <property type="project" value="UniProtKB-KW"/>
</dbReference>
<dbReference type="Gene3D" id="6.10.140.630">
    <property type="match status" value="1"/>
</dbReference>
<dbReference type="InterPro" id="IPR000625">
    <property type="entry name" value="REV_protein"/>
</dbReference>
<dbReference type="Pfam" id="PF00424">
    <property type="entry name" value="REV"/>
    <property type="match status" value="1"/>
</dbReference>
<organism>
    <name type="scientific">Simian immunodeficiency virus (isolate TAN1)</name>
    <name type="common">SIV-cpz</name>
    <name type="synonym">Chimpanzee immunodeficiency virus</name>
    <dbReference type="NCBI Taxonomy" id="388910"/>
    <lineage>
        <taxon>Viruses</taxon>
        <taxon>Riboviria</taxon>
        <taxon>Pararnavirae</taxon>
        <taxon>Artverviricota</taxon>
        <taxon>Revtraviricetes</taxon>
        <taxon>Ortervirales</taxon>
        <taxon>Retroviridae</taxon>
        <taxon>Orthoretrovirinae</taxon>
        <taxon>Lentivirus</taxon>
        <taxon>Simian immunodeficiency virus</taxon>
    </lineage>
</organism>
<name>REV_SIVTN</name>
<protein>
    <recommendedName>
        <fullName>Protein Rev</fullName>
    </recommendedName>
    <alternativeName>
        <fullName>Regulator of expression of viral proteins</fullName>
    </alternativeName>
</protein>
<organismHost>
    <name type="scientific">Pan troglodytes</name>
    <name type="common">Chimpanzee</name>
    <dbReference type="NCBI Taxonomy" id="9598"/>
</organismHost>
<comment type="function">
    <text evidence="1">Escorts unspliced or incompletely spliced viral pre-mRNAs (late transcripts) out of the nucleus of infected cells. These pre-mRNAs carry a recognition sequence called Rev responsive element (RRE) located in the env gene, that is not present in fully spliced viral mRNAs (early transcripts). This function is essential since most viral proteins are translated from unspliced or partially spliced pre-mRNAs which cannot exit the nucleus by the pathway used by fully processed cellular mRNAs (By similarity).</text>
</comment>
<comment type="subunit">
    <text evidence="1">Homomultimer; when bound to the RRE. Multimeric assembly is essential for activity (By similarity).</text>
</comment>
<comment type="subcellular location">
    <subcellularLocation>
        <location>Host nucleus</location>
        <location>Host nucleolus</location>
    </subcellularLocation>
    <subcellularLocation>
        <location>Host cytoplasm</location>
    </subcellularLocation>
    <text evidence="1">The presence of both nuclear import and nuclear export signals leads to continuous shuttling between the nucleus and cytoplasm.</text>
</comment>
<comment type="domain">
    <text evidence="1">The RNA-binding motif binds to the RRE, a stem-and-loop structure present in incompletely spliced viral pre-mRNAs. This region also contains the NLS which mediates nuclear localization. These overlapping functions prevent Rev bound to RRE from undesirable return to the nucleus. When Rev binds the RRE, the NLS becomes masked while the NES remains accessible (By similarity).</text>
</comment>